<keyword id="KW-0903">Direct protein sequencing</keyword>
<keyword id="KW-1015">Disulfide bond</keyword>
<keyword id="KW-0646">Protease inhibitor</keyword>
<keyword id="KW-1267">Proteomics identification</keyword>
<keyword id="KW-1185">Reference proteome</keyword>
<keyword id="KW-0964">Secreted</keyword>
<keyword id="KW-0722">Serine protease inhibitor</keyword>
<keyword id="KW-0732">Signal</keyword>
<feature type="signal peptide" evidence="3">
    <location>
        <begin position="1"/>
        <end position="19"/>
    </location>
</feature>
<feature type="chain" id="PRO_0000333808" description="Serine protease inhibitor Kazal-type 9">
    <location>
        <begin position="20"/>
        <end position="86"/>
    </location>
</feature>
<feature type="domain" description="Kazal-like" evidence="1">
    <location>
        <begin position="26"/>
        <end position="86"/>
    </location>
</feature>
<feature type="site" description="Reactive bond" evidence="1">
    <location>
        <begin position="48"/>
        <end position="49"/>
    </location>
</feature>
<feature type="disulfide bond" evidence="1">
    <location>
        <begin position="32"/>
        <end position="68"/>
    </location>
</feature>
<feature type="disulfide bond" evidence="1">
    <location>
        <begin position="46"/>
        <end position="65"/>
    </location>
</feature>
<feature type="disulfide bond" evidence="1">
    <location>
        <begin position="54"/>
        <end position="86"/>
    </location>
</feature>
<feature type="sequence conflict" description="In Ref. 1; AA sequence." evidence="4" ref="1">
    <original>K</original>
    <variation>Q</variation>
    <location>
        <position position="27"/>
    </location>
</feature>
<accession>Q5DT21</accession>
<accession>B2RPN9</accession>
<protein>
    <recommendedName>
        <fullName>Serine protease inhibitor Kazal-type 9</fullName>
    </recommendedName>
    <alternativeName>
        <fullName>Lymphoepithelial Kazal-type-related inhibitor 2</fullName>
    </alternativeName>
</protein>
<name>ISK9_HUMAN</name>
<reference key="1">
    <citation type="journal article" date="2009" name="J. Invest. Dermatol.">
        <title>SPINK9: a selective, skin-specific Kazal-type serine protease inhibitor.</title>
        <authorList>
            <person name="Brattsand M."/>
            <person name="Stefansson K."/>
            <person name="Hubiche T."/>
            <person name="Nilsson S.K."/>
            <person name="Egelrud T."/>
        </authorList>
    </citation>
    <scope>NUCLEOTIDE SEQUENCE [MRNA]</scope>
    <scope>PROTEIN SEQUENCE OF 20-33</scope>
    <scope>IDENTIFICATION BY MASS SPECTROMETRY</scope>
    <scope>FUNCTION</scope>
    <scope>SUBUNIT</scope>
    <scope>TISSUE SPECIFICITY</scope>
    <scope>INTERACTION WITH KLK5 AND KLK8</scope>
</reference>
<reference key="2">
    <citation type="journal article" date="2009" name="PLoS ONE">
        <title>Identification of lympho-epithelial Kazal-type inhibitor 2 in human skin as a kallikrein-related peptidase 5-specific protease inhibitor.</title>
        <authorList>
            <person name="Meyer-Hoffert U."/>
            <person name="Wu Z."/>
            <person name="Schroeder J.M."/>
        </authorList>
    </citation>
    <scope>NUCLEOTIDE SEQUENCE [MRNA]</scope>
    <scope>PROTEIN SEQUENCE OF 26-50</scope>
    <scope>IDENTIFICATION BY MASS SPECTROMETRY</scope>
    <scope>FUNCTION</scope>
    <scope>TISSUE SPECIFICITY</scope>
    <source>
        <tissue>Skin</tissue>
    </source>
</reference>
<reference key="3">
    <citation type="journal article" date="2004" name="Genome Res.">
        <title>The status, quality, and expansion of the NIH full-length cDNA project: the Mammalian Gene Collection (MGC).</title>
        <authorList>
            <consortium name="The MGC Project Team"/>
        </authorList>
    </citation>
    <scope>NUCLEOTIDE SEQUENCE [LARGE SCALE MRNA]</scope>
</reference>
<gene>
    <name type="primary">SPINK9</name>
    <name type="synonym">LEKTI2</name>
</gene>
<sequence length="86" mass="9756">MRATAIVLLLALTLATMFSIECAKQTKQMVDCSHYKKLPPGQQRFCHHMYDPICGSDGKTYKNDCFFCSKVKKTDGTLKFVHFGKC</sequence>
<proteinExistence type="evidence at protein level"/>
<dbReference type="EMBL" id="AY396740">
    <property type="protein sequence ID" value="AAR91618.1"/>
    <property type="molecule type" value="mRNA"/>
</dbReference>
<dbReference type="EMBL" id="BC137530">
    <property type="protein sequence ID" value="AAI37531.1"/>
    <property type="molecule type" value="mRNA"/>
</dbReference>
<dbReference type="EMBL" id="BC137531">
    <property type="protein sequence ID" value="AAI37532.1"/>
    <property type="molecule type" value="mRNA"/>
</dbReference>
<dbReference type="CCDS" id="CCDS34269.1"/>
<dbReference type="RefSeq" id="NP_001035523.1">
    <property type="nucleotide sequence ID" value="NM_001040433.2"/>
</dbReference>
<dbReference type="SMR" id="Q5DT21"/>
<dbReference type="BioGRID" id="568744">
    <property type="interactions" value="2"/>
</dbReference>
<dbReference type="FunCoup" id="Q5DT21">
    <property type="interactions" value="30"/>
</dbReference>
<dbReference type="IntAct" id="Q5DT21">
    <property type="interactions" value="1"/>
</dbReference>
<dbReference type="STRING" id="9606.ENSP00000367139"/>
<dbReference type="MEROPS" id="I01.054"/>
<dbReference type="BioMuta" id="SPINK9"/>
<dbReference type="DMDM" id="74707721"/>
<dbReference type="MassIVE" id="Q5DT21"/>
<dbReference type="PaxDb" id="9606-ENSP00000367139"/>
<dbReference type="PeptideAtlas" id="Q5DT21"/>
<dbReference type="ProteomicsDB" id="62751"/>
<dbReference type="Pumba" id="Q5DT21"/>
<dbReference type="Antibodypedia" id="49040">
    <property type="antibodies" value="40 antibodies from 13 providers"/>
</dbReference>
<dbReference type="DNASU" id="643394"/>
<dbReference type="Ensembl" id="ENST00000377906.2">
    <property type="protein sequence ID" value="ENSP00000367139.1"/>
    <property type="gene ID" value="ENSG00000204909.8"/>
</dbReference>
<dbReference type="GeneID" id="643394"/>
<dbReference type="KEGG" id="hsa:643394"/>
<dbReference type="MANE-Select" id="ENST00000377906.2">
    <property type="protein sequence ID" value="ENSP00000367139.1"/>
    <property type="RefSeq nucleotide sequence ID" value="NM_001040433.2"/>
    <property type="RefSeq protein sequence ID" value="NP_001035523.1"/>
</dbReference>
<dbReference type="UCSC" id="uc003lpe.1">
    <property type="organism name" value="human"/>
</dbReference>
<dbReference type="AGR" id="HGNC:32951"/>
<dbReference type="CTD" id="643394"/>
<dbReference type="GeneCards" id="SPINK9"/>
<dbReference type="HGNC" id="HGNC:32951">
    <property type="gene designation" value="SPINK9"/>
</dbReference>
<dbReference type="HPA" id="ENSG00000204909">
    <property type="expression patterns" value="Tissue enhanced (bone marrow, lymphoid tissue, retina)"/>
</dbReference>
<dbReference type="MIM" id="613511">
    <property type="type" value="gene"/>
</dbReference>
<dbReference type="neXtProt" id="NX_Q5DT21"/>
<dbReference type="OpenTargets" id="ENSG00000204909"/>
<dbReference type="PharmGKB" id="PA162404560"/>
<dbReference type="VEuPathDB" id="HostDB:ENSG00000204909"/>
<dbReference type="eggNOG" id="KOG3649">
    <property type="taxonomic scope" value="Eukaryota"/>
</dbReference>
<dbReference type="GeneTree" id="ENSGT00530000064312"/>
<dbReference type="HOGENOM" id="CLU_169765_4_0_1"/>
<dbReference type="InParanoid" id="Q5DT21"/>
<dbReference type="OMA" id="VDCSEYK"/>
<dbReference type="OrthoDB" id="328123at2759"/>
<dbReference type="PAN-GO" id="Q5DT21">
    <property type="GO annotations" value="0 GO annotations based on evolutionary models"/>
</dbReference>
<dbReference type="PhylomeDB" id="Q5DT21"/>
<dbReference type="PathwayCommons" id="Q5DT21"/>
<dbReference type="Reactome" id="R-HSA-6809371">
    <property type="pathway name" value="Formation of the cornified envelope"/>
</dbReference>
<dbReference type="SignaLink" id="Q5DT21"/>
<dbReference type="BioGRID-ORCS" id="643394">
    <property type="hits" value="12 hits in 1111 CRISPR screens"/>
</dbReference>
<dbReference type="GenomeRNAi" id="643394"/>
<dbReference type="Pharos" id="Q5DT21">
    <property type="development level" value="Tbio"/>
</dbReference>
<dbReference type="PRO" id="PR:Q5DT21"/>
<dbReference type="Proteomes" id="UP000005640">
    <property type="component" value="Chromosome 5"/>
</dbReference>
<dbReference type="RNAct" id="Q5DT21">
    <property type="molecule type" value="protein"/>
</dbReference>
<dbReference type="Bgee" id="ENSG00000204909">
    <property type="expression patterns" value="Expressed in male germ line stem cell (sensu Vertebrata) in testis and 91 other cell types or tissues"/>
</dbReference>
<dbReference type="ExpressionAtlas" id="Q5DT21">
    <property type="expression patterns" value="baseline and differential"/>
</dbReference>
<dbReference type="GO" id="GO:0005576">
    <property type="term" value="C:extracellular region"/>
    <property type="evidence" value="ECO:0000304"/>
    <property type="project" value="Reactome"/>
</dbReference>
<dbReference type="GO" id="GO:0004867">
    <property type="term" value="F:serine-type endopeptidase inhibitor activity"/>
    <property type="evidence" value="ECO:0000314"/>
    <property type="project" value="UniProtKB"/>
</dbReference>
<dbReference type="FunFam" id="3.30.60.30:FF:000037">
    <property type="entry name" value="Ovomucoid"/>
    <property type="match status" value="1"/>
</dbReference>
<dbReference type="Gene3D" id="3.30.60.30">
    <property type="match status" value="1"/>
</dbReference>
<dbReference type="InterPro" id="IPR050159">
    <property type="entry name" value="Kazal-type_SerProtInhib"/>
</dbReference>
<dbReference type="InterPro" id="IPR002350">
    <property type="entry name" value="Kazal_dom"/>
</dbReference>
<dbReference type="InterPro" id="IPR036058">
    <property type="entry name" value="Kazal_dom_sf"/>
</dbReference>
<dbReference type="InterPro" id="IPR001239">
    <property type="entry name" value="Prot_inh_Kazal-m"/>
</dbReference>
<dbReference type="PANTHER" id="PTHR47499">
    <property type="entry name" value="SERINE PROTEASE INHIBITOR KAZAL-TYPE 7 SPINK7"/>
    <property type="match status" value="1"/>
</dbReference>
<dbReference type="PANTHER" id="PTHR47499:SF2">
    <property type="entry name" value="SERINE PROTEASE INHIBITOR KAZAL-TYPE 9"/>
    <property type="match status" value="1"/>
</dbReference>
<dbReference type="Pfam" id="PF00050">
    <property type="entry name" value="Kazal_1"/>
    <property type="match status" value="1"/>
</dbReference>
<dbReference type="PRINTS" id="PR00290">
    <property type="entry name" value="KAZALINHBTR"/>
</dbReference>
<dbReference type="SMART" id="SM00280">
    <property type="entry name" value="KAZAL"/>
    <property type="match status" value="1"/>
</dbReference>
<dbReference type="SUPFAM" id="SSF100895">
    <property type="entry name" value="Kazal-type serine protease inhibitors"/>
    <property type="match status" value="1"/>
</dbReference>
<dbReference type="PROSITE" id="PS00282">
    <property type="entry name" value="KAZAL_1"/>
    <property type="match status" value="1"/>
</dbReference>
<dbReference type="PROSITE" id="PS51465">
    <property type="entry name" value="KAZAL_2"/>
    <property type="match status" value="1"/>
</dbReference>
<organism>
    <name type="scientific">Homo sapiens</name>
    <name type="common">Human</name>
    <dbReference type="NCBI Taxonomy" id="9606"/>
    <lineage>
        <taxon>Eukaryota</taxon>
        <taxon>Metazoa</taxon>
        <taxon>Chordata</taxon>
        <taxon>Craniata</taxon>
        <taxon>Vertebrata</taxon>
        <taxon>Euteleostomi</taxon>
        <taxon>Mammalia</taxon>
        <taxon>Eutheria</taxon>
        <taxon>Euarchontoglires</taxon>
        <taxon>Primates</taxon>
        <taxon>Haplorrhini</taxon>
        <taxon>Catarrhini</taxon>
        <taxon>Hominidae</taxon>
        <taxon>Homo</taxon>
    </lineage>
</organism>
<comment type="function">
    <text evidence="2 3">Serine protease inhibitor which specifically inhibits KLK5. May contribute to the regulation of the desquamation process in skin by inhibiting KLK5.</text>
</comment>
<comment type="subunit">
    <text evidence="3">Dimer. Interacts with KLK5 and KLK8.</text>
</comment>
<comment type="interaction">
    <interactant intactId="EBI-13119580">
        <id>Q5DT21</id>
    </interactant>
    <interactant intactId="EBI-347996">
        <id>O43765</id>
        <label>SGTA</label>
    </interactant>
    <organismsDiffer>false</organismsDiffer>
    <experiments>3</experiments>
</comment>
<comment type="subcellular location">
    <subcellularLocation>
        <location evidence="4">Secreted</location>
    </subcellularLocation>
</comment>
<comment type="tissue specificity">
    <text evidence="2 3">Skin. Highly expressed at sites of hyperkeratosis. Also detected in thymus, tonsils, testis, pancreas, liver, placenta and brain. Expressed at stratum granulosum and stratum corneum at palmar and plantar sites (at protein level).</text>
</comment>
<evidence type="ECO:0000255" key="1">
    <source>
        <dbReference type="PROSITE-ProRule" id="PRU00798"/>
    </source>
</evidence>
<evidence type="ECO:0000269" key="2">
    <source>
    </source>
</evidence>
<evidence type="ECO:0000269" key="3">
    <source>
    </source>
</evidence>
<evidence type="ECO:0000305" key="4"/>